<proteinExistence type="evidence at protein level"/>
<dbReference type="EC" id="1.1.1.87"/>
<dbReference type="EMBL" id="CU329670">
    <property type="protein sequence ID" value="CAB11688.1"/>
    <property type="molecule type" value="Genomic_DNA"/>
</dbReference>
<dbReference type="PIR" id="T38621">
    <property type="entry name" value="T38621"/>
</dbReference>
<dbReference type="RefSeq" id="NP_594004.1">
    <property type="nucleotide sequence ID" value="NM_001019430.2"/>
</dbReference>
<dbReference type="PDB" id="3TY3">
    <property type="method" value="X-ray"/>
    <property type="resolution" value="1.85 A"/>
    <property type="chains" value="A/B=1-362"/>
</dbReference>
<dbReference type="PDB" id="3TY4">
    <property type="method" value="X-ray"/>
    <property type="resolution" value="1.55 A"/>
    <property type="chains" value="A/B=1-362"/>
</dbReference>
<dbReference type="PDBsum" id="3TY3"/>
<dbReference type="PDBsum" id="3TY4"/>
<dbReference type="SMR" id="O14104"/>
<dbReference type="BioGRID" id="279063">
    <property type="interactions" value="22"/>
</dbReference>
<dbReference type="FunCoup" id="O14104">
    <property type="interactions" value="298"/>
</dbReference>
<dbReference type="STRING" id="284812.O14104"/>
<dbReference type="iPTMnet" id="O14104"/>
<dbReference type="PaxDb" id="4896-SPAC31G5.04.1"/>
<dbReference type="EnsemblFungi" id="SPAC31G5.04.1">
    <property type="protein sequence ID" value="SPAC31G5.04.1:pep"/>
    <property type="gene ID" value="SPAC31G5.04"/>
</dbReference>
<dbReference type="GeneID" id="2542609"/>
<dbReference type="KEGG" id="spo:2542609"/>
<dbReference type="PomBase" id="SPAC31G5.04">
    <property type="gene designation" value="lys12"/>
</dbReference>
<dbReference type="VEuPathDB" id="FungiDB:SPAC31G5.04"/>
<dbReference type="eggNOG" id="KOG0785">
    <property type="taxonomic scope" value="Eukaryota"/>
</dbReference>
<dbReference type="HOGENOM" id="CLU_031953_0_1_1"/>
<dbReference type="InParanoid" id="O14104"/>
<dbReference type="OMA" id="DSFVMGE"/>
<dbReference type="PhylomeDB" id="O14104"/>
<dbReference type="UniPathway" id="UPA00033">
    <property type="reaction ID" value="UER00030"/>
</dbReference>
<dbReference type="EvolutionaryTrace" id="O14104"/>
<dbReference type="PRO" id="PR:O14104"/>
<dbReference type="Proteomes" id="UP000002485">
    <property type="component" value="Chromosome I"/>
</dbReference>
<dbReference type="GO" id="GO:0005737">
    <property type="term" value="C:cytoplasm"/>
    <property type="evidence" value="ECO:0007005"/>
    <property type="project" value="PomBase"/>
</dbReference>
<dbReference type="GO" id="GO:0005759">
    <property type="term" value="C:mitochondrial matrix"/>
    <property type="evidence" value="ECO:0000305"/>
    <property type="project" value="PomBase"/>
</dbReference>
<dbReference type="GO" id="GO:0005739">
    <property type="term" value="C:mitochondrion"/>
    <property type="evidence" value="ECO:0000318"/>
    <property type="project" value="GO_Central"/>
</dbReference>
<dbReference type="GO" id="GO:0047046">
    <property type="term" value="F:homoisocitrate dehydrogenase activity"/>
    <property type="evidence" value="ECO:0000318"/>
    <property type="project" value="GO_Central"/>
</dbReference>
<dbReference type="GO" id="GO:0000287">
    <property type="term" value="F:magnesium ion binding"/>
    <property type="evidence" value="ECO:0007669"/>
    <property type="project" value="InterPro"/>
</dbReference>
<dbReference type="GO" id="GO:0051287">
    <property type="term" value="F:NAD binding"/>
    <property type="evidence" value="ECO:0007669"/>
    <property type="project" value="InterPro"/>
</dbReference>
<dbReference type="GO" id="GO:0009085">
    <property type="term" value="P:lysine biosynthetic process"/>
    <property type="evidence" value="ECO:0000315"/>
    <property type="project" value="PomBase"/>
</dbReference>
<dbReference type="GO" id="GO:0019878">
    <property type="term" value="P:lysine biosynthetic process via aminoadipic acid"/>
    <property type="evidence" value="ECO:0000315"/>
    <property type="project" value="PomBase"/>
</dbReference>
<dbReference type="FunFam" id="3.40.718.10:FF:000012">
    <property type="entry name" value="Homoisocitrate dehydrogenase, mitochondrial"/>
    <property type="match status" value="1"/>
</dbReference>
<dbReference type="Gene3D" id="3.40.718.10">
    <property type="entry name" value="Isopropylmalate Dehydrogenase"/>
    <property type="match status" value="1"/>
</dbReference>
<dbReference type="InterPro" id="IPR019818">
    <property type="entry name" value="IsoCit/isopropylmalate_DH_CS"/>
</dbReference>
<dbReference type="InterPro" id="IPR024084">
    <property type="entry name" value="IsoPropMal-DH-like_dom"/>
</dbReference>
<dbReference type="PANTHER" id="PTHR11835">
    <property type="entry name" value="DECARBOXYLATING DEHYDROGENASES-ISOCITRATE, ISOPROPYLMALATE, TARTRATE"/>
    <property type="match status" value="1"/>
</dbReference>
<dbReference type="PANTHER" id="PTHR11835:SF48">
    <property type="entry name" value="HOMOISOCITRATE DEHYDROGENASE, MITOCHONDRIAL"/>
    <property type="match status" value="1"/>
</dbReference>
<dbReference type="Pfam" id="PF00180">
    <property type="entry name" value="Iso_dh"/>
    <property type="match status" value="1"/>
</dbReference>
<dbReference type="SMART" id="SM01329">
    <property type="entry name" value="Iso_dh"/>
    <property type="match status" value="1"/>
</dbReference>
<dbReference type="SUPFAM" id="SSF53659">
    <property type="entry name" value="Isocitrate/Isopropylmalate dehydrogenase-like"/>
    <property type="match status" value="1"/>
</dbReference>
<dbReference type="PROSITE" id="PS00470">
    <property type="entry name" value="IDH_IMDH"/>
    <property type="match status" value="1"/>
</dbReference>
<keyword id="KW-0002">3D-structure</keyword>
<keyword id="KW-0028">Amino-acid biosynthesis</keyword>
<keyword id="KW-0963">Cytoplasm</keyword>
<keyword id="KW-0457">Lysine biosynthesis</keyword>
<keyword id="KW-0460">Magnesium</keyword>
<keyword id="KW-0479">Metal-binding</keyword>
<keyword id="KW-0520">NAD</keyword>
<keyword id="KW-0560">Oxidoreductase</keyword>
<keyword id="KW-0597">Phosphoprotein</keyword>
<keyword id="KW-1185">Reference proteome</keyword>
<gene>
    <name type="primary">lys12</name>
    <name type="ORF">SPAC31G5.04</name>
</gene>
<comment type="catalytic activity">
    <reaction>
        <text>(2R,3S)-homoisocitrate + NAD(+) = 2-oxoadipate + CO2 + NADH</text>
        <dbReference type="Rhea" id="RHEA:11900"/>
        <dbReference type="ChEBI" id="CHEBI:15404"/>
        <dbReference type="ChEBI" id="CHEBI:16526"/>
        <dbReference type="ChEBI" id="CHEBI:57499"/>
        <dbReference type="ChEBI" id="CHEBI:57540"/>
        <dbReference type="ChEBI" id="CHEBI:57945"/>
        <dbReference type="EC" id="1.1.1.87"/>
    </reaction>
</comment>
<comment type="cofactor">
    <cofactor evidence="1">
        <name>Mg(2+)</name>
        <dbReference type="ChEBI" id="CHEBI:18420"/>
    </cofactor>
    <text evidence="1">Binds 1 Mg(2+) ion per subunit.</text>
</comment>
<comment type="pathway">
    <text>Amino-acid biosynthesis; L-lysine biosynthesis via AAA pathway; L-alpha-aminoadipate from 2-oxoglutarate: step 4/5.</text>
</comment>
<comment type="subcellular location">
    <subcellularLocation>
        <location evidence="3">Cytoplasm</location>
    </subcellularLocation>
</comment>
<comment type="similarity">
    <text evidence="5">Belongs to the isocitrate and isopropylmalate dehydrogenases family.</text>
</comment>
<accession>O14104</accession>
<name>LYS12_SCHPO</name>
<reference key="1">
    <citation type="journal article" date="2002" name="Nature">
        <title>The genome sequence of Schizosaccharomyces pombe.</title>
        <authorList>
            <person name="Wood V."/>
            <person name="Gwilliam R."/>
            <person name="Rajandream M.A."/>
            <person name="Lyne M.H."/>
            <person name="Lyne R."/>
            <person name="Stewart A."/>
            <person name="Sgouros J.G."/>
            <person name="Peat N."/>
            <person name="Hayles J."/>
            <person name="Baker S.G."/>
            <person name="Basham D."/>
            <person name="Bowman S."/>
            <person name="Brooks K."/>
            <person name="Brown D."/>
            <person name="Brown S."/>
            <person name="Chillingworth T."/>
            <person name="Churcher C.M."/>
            <person name="Collins M."/>
            <person name="Connor R."/>
            <person name="Cronin A."/>
            <person name="Davis P."/>
            <person name="Feltwell T."/>
            <person name="Fraser A."/>
            <person name="Gentles S."/>
            <person name="Goble A."/>
            <person name="Hamlin N."/>
            <person name="Harris D.E."/>
            <person name="Hidalgo J."/>
            <person name="Hodgson G."/>
            <person name="Holroyd S."/>
            <person name="Hornsby T."/>
            <person name="Howarth S."/>
            <person name="Huckle E.J."/>
            <person name="Hunt S."/>
            <person name="Jagels K."/>
            <person name="James K.D."/>
            <person name="Jones L."/>
            <person name="Jones M."/>
            <person name="Leather S."/>
            <person name="McDonald S."/>
            <person name="McLean J."/>
            <person name="Mooney P."/>
            <person name="Moule S."/>
            <person name="Mungall K.L."/>
            <person name="Murphy L.D."/>
            <person name="Niblett D."/>
            <person name="Odell C."/>
            <person name="Oliver K."/>
            <person name="O'Neil S."/>
            <person name="Pearson D."/>
            <person name="Quail M.A."/>
            <person name="Rabbinowitsch E."/>
            <person name="Rutherford K.M."/>
            <person name="Rutter S."/>
            <person name="Saunders D."/>
            <person name="Seeger K."/>
            <person name="Sharp S."/>
            <person name="Skelton J."/>
            <person name="Simmonds M.N."/>
            <person name="Squares R."/>
            <person name="Squares S."/>
            <person name="Stevens K."/>
            <person name="Taylor K."/>
            <person name="Taylor R.G."/>
            <person name="Tivey A."/>
            <person name="Walsh S.V."/>
            <person name="Warren T."/>
            <person name="Whitehead S."/>
            <person name="Woodward J.R."/>
            <person name="Volckaert G."/>
            <person name="Aert R."/>
            <person name="Robben J."/>
            <person name="Grymonprez B."/>
            <person name="Weltjens I."/>
            <person name="Vanstreels E."/>
            <person name="Rieger M."/>
            <person name="Schaefer M."/>
            <person name="Mueller-Auer S."/>
            <person name="Gabel C."/>
            <person name="Fuchs M."/>
            <person name="Duesterhoeft A."/>
            <person name="Fritzc C."/>
            <person name="Holzer E."/>
            <person name="Moestl D."/>
            <person name="Hilbert H."/>
            <person name="Borzym K."/>
            <person name="Langer I."/>
            <person name="Beck A."/>
            <person name="Lehrach H."/>
            <person name="Reinhardt R."/>
            <person name="Pohl T.M."/>
            <person name="Eger P."/>
            <person name="Zimmermann W."/>
            <person name="Wedler H."/>
            <person name="Wambutt R."/>
            <person name="Purnelle B."/>
            <person name="Goffeau A."/>
            <person name="Cadieu E."/>
            <person name="Dreano S."/>
            <person name="Gloux S."/>
            <person name="Lelaure V."/>
            <person name="Mottier S."/>
            <person name="Galibert F."/>
            <person name="Aves S.J."/>
            <person name="Xiang Z."/>
            <person name="Hunt C."/>
            <person name="Moore K."/>
            <person name="Hurst S.M."/>
            <person name="Lucas M."/>
            <person name="Rochet M."/>
            <person name="Gaillardin C."/>
            <person name="Tallada V.A."/>
            <person name="Garzon A."/>
            <person name="Thode G."/>
            <person name="Daga R.R."/>
            <person name="Cruzado L."/>
            <person name="Jimenez J."/>
            <person name="Sanchez M."/>
            <person name="del Rey F."/>
            <person name="Benito J."/>
            <person name="Dominguez A."/>
            <person name="Revuelta J.L."/>
            <person name="Moreno S."/>
            <person name="Armstrong J."/>
            <person name="Forsburg S.L."/>
            <person name="Cerutti L."/>
            <person name="Lowe T."/>
            <person name="McCombie W.R."/>
            <person name="Paulsen I."/>
            <person name="Potashkin J."/>
            <person name="Shpakovski G.V."/>
            <person name="Ussery D."/>
            <person name="Barrell B.G."/>
            <person name="Nurse P."/>
        </authorList>
    </citation>
    <scope>NUCLEOTIDE SEQUENCE [LARGE SCALE GENOMIC DNA]</scope>
    <source>
        <strain>972 / ATCC 24843</strain>
    </source>
</reference>
<reference key="2">
    <citation type="journal article" date="2006" name="Nat. Biotechnol.">
        <title>ORFeome cloning and global analysis of protein localization in the fission yeast Schizosaccharomyces pombe.</title>
        <authorList>
            <person name="Matsuyama A."/>
            <person name="Arai R."/>
            <person name="Yashiroda Y."/>
            <person name="Shirai A."/>
            <person name="Kamata A."/>
            <person name="Sekido S."/>
            <person name="Kobayashi Y."/>
            <person name="Hashimoto A."/>
            <person name="Hamamoto M."/>
            <person name="Hiraoka Y."/>
            <person name="Horinouchi S."/>
            <person name="Yoshida M."/>
        </authorList>
    </citation>
    <scope>SUBCELLULAR LOCATION [LARGE SCALE ANALYSIS]</scope>
</reference>
<reference key="3">
    <citation type="journal article" date="2008" name="J. Proteome Res.">
        <title>Phosphoproteome analysis of fission yeast.</title>
        <authorList>
            <person name="Wilson-Grady J.T."/>
            <person name="Villen J."/>
            <person name="Gygi S.P."/>
        </authorList>
    </citation>
    <scope>PHOSPHORYLATION [LARGE SCALE ANALYSIS] AT SER-81 AND SER-91</scope>
    <scope>IDENTIFICATION BY MASS SPECTROMETRY</scope>
</reference>
<reference key="4">
    <citation type="journal article" date="2012" name="Proteins">
        <title>Crystal structure of homoisocitrate dehydrogenase from Schizosaccharomyces pombe.</title>
        <authorList>
            <person name="Bulfer S.L."/>
            <person name="Hendershot J.M."/>
            <person name="Trievel R.C."/>
        </authorList>
    </citation>
    <scope>X-RAY CRYSTALLOGRAPHY (1.55 ANGSTROMS)</scope>
</reference>
<evidence type="ECO:0000250" key="1">
    <source>
        <dbReference type="UniProtKB" id="P40495"/>
    </source>
</evidence>
<evidence type="ECO:0000250" key="2">
    <source>
        <dbReference type="UniProtKB" id="Q72IW9"/>
    </source>
</evidence>
<evidence type="ECO:0000269" key="3">
    <source>
    </source>
</evidence>
<evidence type="ECO:0000269" key="4">
    <source>
    </source>
</evidence>
<evidence type="ECO:0000305" key="5"/>
<evidence type="ECO:0007829" key="6">
    <source>
        <dbReference type="PDB" id="3TY4"/>
    </source>
</evidence>
<feature type="chain" id="PRO_0000310374" description="Homoisocitrate dehydrogenase">
    <location>
        <begin position="1"/>
        <end position="362"/>
    </location>
</feature>
<feature type="binding site" evidence="2">
    <location>
        <begin position="79"/>
        <end position="81"/>
    </location>
    <ligand>
        <name>NADH</name>
        <dbReference type="ChEBI" id="CHEBI:57945"/>
    </ligand>
</feature>
<feature type="binding site" description="in other chain" evidence="2">
    <location>
        <position position="81"/>
    </location>
    <ligand>
        <name>(2R,3S)-homoisocitrate</name>
        <dbReference type="ChEBI" id="CHEBI:15404"/>
        <note>ligand shared between homodimeric partners</note>
    </ligand>
</feature>
<feature type="binding site" description="in other chain" evidence="2">
    <location>
        <position position="97"/>
    </location>
    <ligand>
        <name>(2R,3S)-homoisocitrate</name>
        <dbReference type="ChEBI" id="CHEBI:15404"/>
        <note>ligand shared between homodimeric partners</note>
    </ligand>
</feature>
<feature type="binding site" description="in other chain" evidence="2">
    <location>
        <position position="107"/>
    </location>
    <ligand>
        <name>(2R,3S)-homoisocitrate</name>
        <dbReference type="ChEBI" id="CHEBI:15404"/>
        <note>ligand shared between homodimeric partners</note>
    </ligand>
</feature>
<feature type="binding site" description="in other chain" evidence="2">
    <location>
        <position position="126"/>
    </location>
    <ligand>
        <name>(2R,3S)-homoisocitrate</name>
        <dbReference type="ChEBI" id="CHEBI:15404"/>
        <note>ligand shared between homodimeric partners</note>
    </ligand>
</feature>
<feature type="binding site" description="in other chain" evidence="2">
    <location>
        <position position="133"/>
    </location>
    <ligand>
        <name>(2R,3S)-homoisocitrate</name>
        <dbReference type="ChEBI" id="CHEBI:15404"/>
        <note>ligand shared between homodimeric partners</note>
    </ligand>
</feature>
<feature type="binding site" evidence="2">
    <location>
        <position position="196"/>
    </location>
    <ligand>
        <name>(2R,3S)-homoisocitrate</name>
        <dbReference type="ChEBI" id="CHEBI:15404"/>
        <note>ligand shared between homodimeric partners</note>
    </ligand>
</feature>
<feature type="binding site" evidence="2">
    <location>
        <position position="198"/>
    </location>
    <ligand>
        <name>(2R,3S)-homoisocitrate</name>
        <dbReference type="ChEBI" id="CHEBI:15404"/>
        <note>ligand shared between homodimeric partners</note>
    </ligand>
</feature>
<feature type="binding site" evidence="2">
    <location>
        <position position="198"/>
    </location>
    <ligand>
        <name>NADH</name>
        <dbReference type="ChEBI" id="CHEBI:57945"/>
    </ligand>
</feature>
<feature type="binding site" evidence="2">
    <location>
        <position position="232"/>
    </location>
    <ligand>
        <name>Mg(2+)</name>
        <dbReference type="ChEBI" id="CHEBI:18420"/>
    </ligand>
</feature>
<feature type="binding site" evidence="2">
    <location>
        <position position="256"/>
    </location>
    <ligand>
        <name>Mg(2+)</name>
        <dbReference type="ChEBI" id="CHEBI:18420"/>
    </ligand>
</feature>
<feature type="binding site" evidence="2">
    <location>
        <position position="260"/>
    </location>
    <ligand>
        <name>Mg(2+)</name>
        <dbReference type="ChEBI" id="CHEBI:18420"/>
    </ligand>
</feature>
<feature type="binding site" evidence="2">
    <location>
        <begin position="289"/>
        <end position="293"/>
    </location>
    <ligand>
        <name>NADH</name>
        <dbReference type="ChEBI" id="CHEBI:57945"/>
    </ligand>
</feature>
<feature type="binding site" evidence="2">
    <location>
        <position position="301"/>
    </location>
    <ligand>
        <name>NADH</name>
        <dbReference type="ChEBI" id="CHEBI:57945"/>
    </ligand>
</feature>
<feature type="modified residue" description="Phosphoserine" evidence="4">
    <location>
        <position position="81"/>
    </location>
</feature>
<feature type="modified residue" description="Phosphoserine" evidence="4">
    <location>
        <position position="91"/>
    </location>
</feature>
<feature type="strand" evidence="6">
    <location>
        <begin position="6"/>
        <end position="15"/>
    </location>
</feature>
<feature type="helix" evidence="6">
    <location>
        <begin position="18"/>
        <end position="30"/>
    </location>
</feature>
<feature type="helix" evidence="6">
    <location>
        <begin position="34"/>
        <end position="36"/>
    </location>
</feature>
<feature type="strand" evidence="6">
    <location>
        <begin position="39"/>
        <end position="44"/>
    </location>
</feature>
<feature type="helix" evidence="6">
    <location>
        <begin position="49"/>
        <end position="55"/>
    </location>
</feature>
<feature type="helix" evidence="6">
    <location>
        <begin position="61"/>
        <end position="70"/>
    </location>
</feature>
<feature type="strand" evidence="6">
    <location>
        <begin position="72"/>
        <end position="78"/>
    </location>
</feature>
<feature type="helix" evidence="6">
    <location>
        <begin position="92"/>
        <end position="99"/>
    </location>
</feature>
<feature type="strand" evidence="6">
    <location>
        <begin position="104"/>
        <end position="110"/>
    </location>
</feature>
<feature type="strand" evidence="6">
    <location>
        <begin position="116"/>
        <end position="118"/>
    </location>
</feature>
<feature type="strand" evidence="6">
    <location>
        <begin position="121"/>
        <end position="127"/>
    </location>
</feature>
<feature type="helix" evidence="6">
    <location>
        <begin position="132"/>
        <end position="134"/>
    </location>
</feature>
<feature type="strand" evidence="6">
    <location>
        <begin position="137"/>
        <end position="141"/>
    </location>
</feature>
<feature type="strand" evidence="6">
    <location>
        <begin position="148"/>
        <end position="156"/>
    </location>
</feature>
<feature type="helix" evidence="6">
    <location>
        <begin position="157"/>
        <end position="179"/>
    </location>
</feature>
<feature type="strand" evidence="6">
    <location>
        <begin position="190"/>
        <end position="195"/>
    </location>
</feature>
<feature type="turn" evidence="6">
    <location>
        <begin position="197"/>
        <end position="199"/>
    </location>
</feature>
<feature type="helix" evidence="6">
    <location>
        <begin position="203"/>
        <end position="214"/>
    </location>
</feature>
<feature type="helix" evidence="6">
    <location>
        <begin position="215"/>
        <end position="217"/>
    </location>
</feature>
<feature type="helix" evidence="6">
    <location>
        <begin position="219"/>
        <end position="221"/>
    </location>
</feature>
<feature type="strand" evidence="6">
    <location>
        <begin position="224"/>
        <end position="230"/>
    </location>
</feature>
<feature type="helix" evidence="6">
    <location>
        <begin position="231"/>
        <end position="240"/>
    </location>
</feature>
<feature type="helix" evidence="6">
    <location>
        <begin position="242"/>
        <end position="244"/>
    </location>
</feature>
<feature type="strand" evidence="6">
    <location>
        <begin position="246"/>
        <end position="250"/>
    </location>
</feature>
<feature type="helix" evidence="6">
    <location>
        <begin position="252"/>
        <end position="263"/>
    </location>
</feature>
<feature type="helix" evidence="6">
    <location>
        <begin position="264"/>
        <end position="266"/>
    </location>
</feature>
<feature type="helix" evidence="6">
    <location>
        <begin position="269"/>
        <end position="271"/>
    </location>
</feature>
<feature type="strand" evidence="6">
    <location>
        <begin position="275"/>
        <end position="277"/>
    </location>
</feature>
<feature type="strand" evidence="6">
    <location>
        <begin position="282"/>
        <end position="284"/>
    </location>
</feature>
<feature type="turn" evidence="6">
    <location>
        <begin position="292"/>
        <end position="296"/>
    </location>
</feature>
<feature type="helix" evidence="6">
    <location>
        <begin position="303"/>
        <end position="315"/>
    </location>
</feature>
<feature type="helix" evidence="6">
    <location>
        <begin position="319"/>
        <end position="335"/>
    </location>
</feature>
<feature type="helix" evidence="6">
    <location>
        <begin position="341"/>
        <end position="343"/>
    </location>
</feature>
<feature type="helix" evidence="6">
    <location>
        <begin position="349"/>
        <end position="359"/>
    </location>
</feature>
<organism>
    <name type="scientific">Schizosaccharomyces pombe (strain 972 / ATCC 24843)</name>
    <name type="common">Fission yeast</name>
    <dbReference type="NCBI Taxonomy" id="284812"/>
    <lineage>
        <taxon>Eukaryota</taxon>
        <taxon>Fungi</taxon>
        <taxon>Dikarya</taxon>
        <taxon>Ascomycota</taxon>
        <taxon>Taphrinomycotina</taxon>
        <taxon>Schizosaccharomycetes</taxon>
        <taxon>Schizosaccharomycetales</taxon>
        <taxon>Schizosaccharomycetaceae</taxon>
        <taxon>Schizosaccharomyces</taxon>
    </lineage>
</organism>
<sequence>MSATRRIVLGLIPADGIGKEVVPAARRLMENLPAKHKLKFDFIDLDAGWGTFERTGKALPERTVERLKTECNAALFGAVQSPTHKVAGYSSPIVALRKKMGLYANVRPVKSLDGAKGKPVDLVIVRENTECLYVKEERMVQNTPGKRVAEAIRRISEEASTKIGKMAFEIAKSRQKIRESGTYSIHKKPLVTIIHKSNVMSVTDGLFRESCRHAQSLDPSYASINVDEQIVDSMVYRLFREPECFDVVVAPNLYGDILSDGAASLIGSLGLVPSANVGDNFVMSEPVHGSAPDIAGRGIANPVATFRSVALMLEFMGHQDAAADIYTAVDKVLTEGKVLTPDLGGKSGTNEITDAVLANIHN</sequence>
<protein>
    <recommendedName>
        <fullName>Homoisocitrate dehydrogenase</fullName>
        <shortName>HICDH</shortName>
        <ecNumber>1.1.1.87</ecNumber>
    </recommendedName>
</protein>